<name>DPP5_EMENI</name>
<proteinExistence type="evidence at protein level"/>
<reference key="1">
    <citation type="journal article" date="2005" name="Nature">
        <title>Sequencing of Aspergillus nidulans and comparative analysis with A. fumigatus and A. oryzae.</title>
        <authorList>
            <person name="Galagan J.E."/>
            <person name="Calvo S.E."/>
            <person name="Cuomo C."/>
            <person name="Ma L.-J."/>
            <person name="Wortman J.R."/>
            <person name="Batzoglou S."/>
            <person name="Lee S.-I."/>
            <person name="Bastuerkmen M."/>
            <person name="Spevak C.C."/>
            <person name="Clutterbuck J."/>
            <person name="Kapitonov V."/>
            <person name="Jurka J."/>
            <person name="Scazzocchio C."/>
            <person name="Farman M.L."/>
            <person name="Butler J."/>
            <person name="Purcell S."/>
            <person name="Harris S."/>
            <person name="Braus G.H."/>
            <person name="Draht O."/>
            <person name="Busch S."/>
            <person name="D'Enfert C."/>
            <person name="Bouchier C."/>
            <person name="Goldman G.H."/>
            <person name="Bell-Pedersen D."/>
            <person name="Griffiths-Jones S."/>
            <person name="Doonan J.H."/>
            <person name="Yu J."/>
            <person name="Vienken K."/>
            <person name="Pain A."/>
            <person name="Freitag M."/>
            <person name="Selker E.U."/>
            <person name="Archer D.B."/>
            <person name="Penalva M.A."/>
            <person name="Oakley B.R."/>
            <person name="Momany M."/>
            <person name="Tanaka T."/>
            <person name="Kumagai T."/>
            <person name="Asai K."/>
            <person name="Machida M."/>
            <person name="Nierman W.C."/>
            <person name="Denning D.W."/>
            <person name="Caddick M.X."/>
            <person name="Hynes M."/>
            <person name="Paoletti M."/>
            <person name="Fischer R."/>
            <person name="Miller B.L."/>
            <person name="Dyer P.S."/>
            <person name="Sachs M.S."/>
            <person name="Osmani S.A."/>
            <person name="Birren B.W."/>
        </authorList>
    </citation>
    <scope>NUCLEOTIDE SEQUENCE [LARGE SCALE GENOMIC DNA]</scope>
    <source>
        <strain>FGSC A4 / ATCC 38163 / CBS 112.46 / NRRL 194 / M139</strain>
    </source>
</reference>
<reference key="2">
    <citation type="journal article" date="2009" name="Fungal Genet. Biol.">
        <title>The 2008 update of the Aspergillus nidulans genome annotation: a community effort.</title>
        <authorList>
            <person name="Wortman J.R."/>
            <person name="Gilsenan J.M."/>
            <person name="Joardar V."/>
            <person name="Deegan J."/>
            <person name="Clutterbuck J."/>
            <person name="Andersen M.R."/>
            <person name="Archer D."/>
            <person name="Bencina M."/>
            <person name="Braus G."/>
            <person name="Coutinho P."/>
            <person name="von Dohren H."/>
            <person name="Doonan J."/>
            <person name="Driessen A.J."/>
            <person name="Durek P."/>
            <person name="Espeso E."/>
            <person name="Fekete E."/>
            <person name="Flipphi M."/>
            <person name="Estrada C.G."/>
            <person name="Geysens S."/>
            <person name="Goldman G."/>
            <person name="de Groot P.W."/>
            <person name="Hansen K."/>
            <person name="Harris S.D."/>
            <person name="Heinekamp T."/>
            <person name="Helmstaedt K."/>
            <person name="Henrissat B."/>
            <person name="Hofmann G."/>
            <person name="Homan T."/>
            <person name="Horio T."/>
            <person name="Horiuchi H."/>
            <person name="James S."/>
            <person name="Jones M."/>
            <person name="Karaffa L."/>
            <person name="Karanyi Z."/>
            <person name="Kato M."/>
            <person name="Keller N."/>
            <person name="Kelly D.E."/>
            <person name="Kiel J.A."/>
            <person name="Kim J.M."/>
            <person name="van der Klei I.J."/>
            <person name="Klis F.M."/>
            <person name="Kovalchuk A."/>
            <person name="Krasevec N."/>
            <person name="Kubicek C.P."/>
            <person name="Liu B."/>
            <person name="Maccabe A."/>
            <person name="Meyer V."/>
            <person name="Mirabito P."/>
            <person name="Miskei M."/>
            <person name="Mos M."/>
            <person name="Mullins J."/>
            <person name="Nelson D.R."/>
            <person name="Nielsen J."/>
            <person name="Oakley B.R."/>
            <person name="Osmani S.A."/>
            <person name="Pakula T."/>
            <person name="Paszewski A."/>
            <person name="Paulsen I."/>
            <person name="Pilsyk S."/>
            <person name="Pocsi I."/>
            <person name="Punt P.J."/>
            <person name="Ram A.F."/>
            <person name="Ren Q."/>
            <person name="Robellet X."/>
            <person name="Robson G."/>
            <person name="Seiboth B."/>
            <person name="van Solingen P."/>
            <person name="Specht T."/>
            <person name="Sun J."/>
            <person name="Taheri-Talesh N."/>
            <person name="Takeshita N."/>
            <person name="Ussery D."/>
            <person name="vanKuyk P.A."/>
            <person name="Visser H."/>
            <person name="van de Vondervoort P.J."/>
            <person name="de Vries R.P."/>
            <person name="Walton J."/>
            <person name="Xiang X."/>
            <person name="Xiong Y."/>
            <person name="Zeng A.P."/>
            <person name="Brandt B.W."/>
            <person name="Cornell M.J."/>
            <person name="van den Hondel C.A."/>
            <person name="Visser J."/>
            <person name="Oliver S.G."/>
            <person name="Turner G."/>
        </authorList>
    </citation>
    <scope>GENOME REANNOTATION</scope>
    <source>
        <strain>FGSC A4 / ATCC 38163 / CBS 112.46 / NRRL 194 / M139</strain>
    </source>
</reference>
<reference key="3">
    <citation type="journal article" date="2009" name="Eukaryot. Cell">
        <title>Differential roles of the ChiB chitinase in autolysis and cell death of Aspergillus nidulans.</title>
        <authorList>
            <person name="Shin K.S."/>
            <person name="Kwon N.J."/>
            <person name="Kim Y.H."/>
            <person name="Park H.S."/>
            <person name="Kwon G.S."/>
            <person name="Yu J.H."/>
        </authorList>
    </citation>
    <scope>IDENTIFICATION BY MASS SPECTROMETRY</scope>
</reference>
<evidence type="ECO:0000250" key="1"/>
<evidence type="ECO:0000255" key="2"/>
<evidence type="ECO:0000305" key="3"/>
<dbReference type="EC" id="3.4.14.-"/>
<dbReference type="EMBL" id="AACD01000043">
    <property type="protein sequence ID" value="EAA64677.1"/>
    <property type="molecule type" value="Genomic_DNA"/>
</dbReference>
<dbReference type="EMBL" id="BN001307">
    <property type="protein sequence ID" value="CBF87122.1"/>
    <property type="molecule type" value="Genomic_DNA"/>
</dbReference>
<dbReference type="RefSeq" id="XP_660176.1">
    <property type="nucleotide sequence ID" value="XM_655084.1"/>
</dbReference>
<dbReference type="SMR" id="Q5BA58"/>
<dbReference type="STRING" id="227321.Q5BA58"/>
<dbReference type="ESTHER" id="emeni-q5ba58">
    <property type="family name" value="Prolyl_oligopeptidase_S9"/>
</dbReference>
<dbReference type="GlyCosmos" id="Q5BA58">
    <property type="glycosylation" value="8 sites, No reported glycans"/>
</dbReference>
<dbReference type="EnsemblFungi" id="CBF87122">
    <property type="protein sequence ID" value="CBF87122"/>
    <property type="gene ID" value="ANIA_02572"/>
</dbReference>
<dbReference type="KEGG" id="ani:ANIA_02572"/>
<dbReference type="VEuPathDB" id="FungiDB:AN2572"/>
<dbReference type="eggNOG" id="KOG2100">
    <property type="taxonomic scope" value="Eukaryota"/>
</dbReference>
<dbReference type="HOGENOM" id="CLU_008615_0_1_1"/>
<dbReference type="InParanoid" id="Q5BA58"/>
<dbReference type="OMA" id="YPVRYWD"/>
<dbReference type="OrthoDB" id="416344at2759"/>
<dbReference type="Proteomes" id="UP000000560">
    <property type="component" value="Chromosome VII"/>
</dbReference>
<dbReference type="GO" id="GO:0005576">
    <property type="term" value="C:extracellular region"/>
    <property type="evidence" value="ECO:0007669"/>
    <property type="project" value="UniProtKB-SubCell"/>
</dbReference>
<dbReference type="GO" id="GO:0004177">
    <property type="term" value="F:aminopeptidase activity"/>
    <property type="evidence" value="ECO:0007669"/>
    <property type="project" value="UniProtKB-KW"/>
</dbReference>
<dbReference type="GO" id="GO:0004252">
    <property type="term" value="F:serine-type endopeptidase activity"/>
    <property type="evidence" value="ECO:0000318"/>
    <property type="project" value="GO_Central"/>
</dbReference>
<dbReference type="GO" id="GO:0006508">
    <property type="term" value="P:proteolysis"/>
    <property type="evidence" value="ECO:0007669"/>
    <property type="project" value="UniProtKB-KW"/>
</dbReference>
<dbReference type="FunFam" id="2.120.10.30:FF:000109">
    <property type="entry name" value="Dipeptidyl-peptidase 5"/>
    <property type="match status" value="1"/>
</dbReference>
<dbReference type="FunFam" id="3.40.50.1820:FF:000028">
    <property type="entry name" value="S9 family peptidase"/>
    <property type="match status" value="1"/>
</dbReference>
<dbReference type="Gene3D" id="3.40.50.1820">
    <property type="entry name" value="alpha/beta hydrolase"/>
    <property type="match status" value="1"/>
</dbReference>
<dbReference type="Gene3D" id="2.120.10.30">
    <property type="entry name" value="TolB, C-terminal domain"/>
    <property type="match status" value="1"/>
</dbReference>
<dbReference type="InterPro" id="IPR011042">
    <property type="entry name" value="6-blade_b-propeller_TolB-like"/>
</dbReference>
<dbReference type="InterPro" id="IPR029058">
    <property type="entry name" value="AB_hydrolase_fold"/>
</dbReference>
<dbReference type="InterPro" id="IPR001375">
    <property type="entry name" value="Peptidase_S9_cat"/>
</dbReference>
<dbReference type="PANTHER" id="PTHR42776:SF11">
    <property type="entry name" value="DIPEPTIDYL-PEPTIDASE 5-RELATED"/>
    <property type="match status" value="1"/>
</dbReference>
<dbReference type="PANTHER" id="PTHR42776">
    <property type="entry name" value="SERINE PEPTIDASE S9 FAMILY MEMBER"/>
    <property type="match status" value="1"/>
</dbReference>
<dbReference type="Pfam" id="PF00326">
    <property type="entry name" value="Peptidase_S9"/>
    <property type="match status" value="1"/>
</dbReference>
<dbReference type="SUPFAM" id="SSF53474">
    <property type="entry name" value="alpha/beta-Hydrolases"/>
    <property type="match status" value="1"/>
</dbReference>
<dbReference type="SUPFAM" id="SSF82171">
    <property type="entry name" value="DPP6 N-terminal domain-like"/>
    <property type="match status" value="1"/>
</dbReference>
<accession>Q5BA58</accession>
<accession>C8VPV9</accession>
<gene>
    <name type="primary">dpp5</name>
    <name type="ORF">AN2572</name>
</gene>
<comment type="function">
    <text evidence="1">Extracellular dipeptidyl-peptidase which removes N-terminal dipeptides sequentially from polypeptides having unsubstituted N-termini.</text>
</comment>
<comment type="subcellular location">
    <subcellularLocation>
        <location evidence="1">Secreted</location>
    </subcellularLocation>
</comment>
<comment type="similarity">
    <text evidence="3">Belongs to the peptidase S9C family.</text>
</comment>
<feature type="signal peptide" evidence="2">
    <location>
        <begin position="1"/>
        <end position="18"/>
    </location>
</feature>
<feature type="chain" id="PRO_0000397821" description="Probable dipeptidyl-peptidase 5">
    <location>
        <begin position="19"/>
        <end position="722"/>
    </location>
</feature>
<feature type="active site" description="Charge relay system" evidence="1">
    <location>
        <position position="558"/>
    </location>
</feature>
<feature type="active site" description="Charge relay system" evidence="1">
    <location>
        <position position="641"/>
    </location>
</feature>
<feature type="active site" description="Charge relay system" evidence="1">
    <location>
        <position position="673"/>
    </location>
</feature>
<feature type="glycosylation site" description="N-linked (GlcNAc...) asparagine" evidence="2">
    <location>
        <position position="75"/>
    </location>
</feature>
<feature type="glycosylation site" description="N-linked (GlcNAc...) asparagine" evidence="2">
    <location>
        <position position="78"/>
    </location>
</feature>
<feature type="glycosylation site" description="N-linked (GlcNAc...) asparagine" evidence="2">
    <location>
        <position position="86"/>
    </location>
</feature>
<feature type="glycosylation site" description="N-linked (GlcNAc...) asparagine" evidence="2">
    <location>
        <position position="94"/>
    </location>
</feature>
<feature type="glycosylation site" description="N-linked (GlcNAc...) asparagine" evidence="2">
    <location>
        <position position="151"/>
    </location>
</feature>
<feature type="glycosylation site" description="N-linked (GlcNAc...) asparagine" evidence="2">
    <location>
        <position position="253"/>
    </location>
</feature>
<feature type="glycosylation site" description="N-linked (GlcNAc...) asparagine" evidence="2">
    <location>
        <position position="448"/>
    </location>
</feature>
<feature type="glycosylation site" description="N-linked (GlcNAc...) asparagine" evidence="2">
    <location>
        <position position="605"/>
    </location>
</feature>
<protein>
    <recommendedName>
        <fullName>Probable dipeptidyl-peptidase 5</fullName>
        <ecNumber>3.4.14.-</ecNumber>
    </recommendedName>
    <alternativeName>
        <fullName>Dipeptidyl-peptidase V</fullName>
        <shortName>DPP V</shortName>
        <shortName>DppV</shortName>
    </alternativeName>
</protein>
<keyword id="KW-0031">Aminopeptidase</keyword>
<keyword id="KW-0325">Glycoprotein</keyword>
<keyword id="KW-0378">Hydrolase</keyword>
<keyword id="KW-0645">Protease</keyword>
<keyword id="KW-1185">Reference proteome</keyword>
<keyword id="KW-0964">Secreted</keyword>
<keyword id="KW-0720">Serine protease</keyword>
<keyword id="KW-0732">Signal</keyword>
<organism>
    <name type="scientific">Emericella nidulans (strain FGSC A4 / ATCC 38163 / CBS 112.46 / NRRL 194 / M139)</name>
    <name type="common">Aspergillus nidulans</name>
    <dbReference type="NCBI Taxonomy" id="227321"/>
    <lineage>
        <taxon>Eukaryota</taxon>
        <taxon>Fungi</taxon>
        <taxon>Dikarya</taxon>
        <taxon>Ascomycota</taxon>
        <taxon>Pezizomycotina</taxon>
        <taxon>Eurotiomycetes</taxon>
        <taxon>Eurotiomycetidae</taxon>
        <taxon>Eurotiales</taxon>
        <taxon>Aspergillaceae</taxon>
        <taxon>Aspergillus</taxon>
        <taxon>Aspergillus subgen. Nidulantes</taxon>
    </lineage>
</organism>
<sequence length="722" mass="79446">MGALRWLSLAAAASSALALTPEQLISAPRRSEAIPNPSGNIAVFSSSQYSFDTHESSSAWNLLDLRSGKITPLTNDSNVSEIVWLNDSTLLYINGTNAQIPGGSELWVSGLSNFPSGYKAASLPASFSGLKAVTTKSGDIKFVAYAQSYRNGTAYNEELAETYLSSARIYDSIYVRHWDTYLTTTFNAVFSGTLKKTQHARYASAGSLKNLVAPIPNAESPYPPFGGSSDYDISADGKWVAYKSKAPDVPQANHTTAYIYLVPHDGSETPVPINGPGSAPEGIEGDSNNPVFSPDSKSLAYLQMKDPTYESDRRVIYIYDLASKKITPLATEWDRSPDSLKWTDKSTIVAGSEDEGSGNLFLIPVKKATGDFIPEKLTNGKYASAFYLASGNTLVVTGSTLYSSWYVDLVSLNPKRGTIKNLVSAHEIDPELSGLGPEDISDIWFAGNWTDIHAWVIYPEGFDKSKTYPLAFLIHGGPQGAWYNSWSSRWNPKVFADQGYVVVAPNPTGSTGYGDELTDAIQNNWGGAPYEDLVKAWEYVRDNLDYVDTDRGVAAGASYGGFMVNWIQGSDLGREFKALVTHDGTFVADAKISTEELWFMEREFNGTFWDVRDNYRRFDPSAPERILRFATPHLIIHNDLDYRLPVAEGLSLFNVLQERGVPSRFLNFPDENHWVTSPENSLVWHQQVLGWLNKYSGIAEDNEDAVTLEDTVVPVVNINPPA</sequence>